<accession>Q035A1</accession>
<dbReference type="EMBL" id="CP000423">
    <property type="protein sequence ID" value="ABJ71221.1"/>
    <property type="molecule type" value="Genomic_DNA"/>
</dbReference>
<dbReference type="RefSeq" id="WP_003567529.1">
    <property type="nucleotide sequence ID" value="NC_008526.1"/>
</dbReference>
<dbReference type="RefSeq" id="YP_807663.1">
    <property type="nucleotide sequence ID" value="NC_008526.1"/>
</dbReference>
<dbReference type="SMR" id="Q035A1"/>
<dbReference type="STRING" id="321967.LSEI_2485"/>
<dbReference type="PaxDb" id="321967-LSEI_2485"/>
<dbReference type="GeneID" id="57091065"/>
<dbReference type="KEGG" id="lca:LSEI_2485"/>
<dbReference type="PATRIC" id="fig|321967.11.peg.2439"/>
<dbReference type="HOGENOM" id="CLU_131047_2_1_9"/>
<dbReference type="Proteomes" id="UP000001651">
    <property type="component" value="Chromosome"/>
</dbReference>
<dbReference type="GO" id="GO:0015934">
    <property type="term" value="C:large ribosomal subunit"/>
    <property type="evidence" value="ECO:0007669"/>
    <property type="project" value="InterPro"/>
</dbReference>
<dbReference type="GO" id="GO:0003735">
    <property type="term" value="F:structural constituent of ribosome"/>
    <property type="evidence" value="ECO:0007669"/>
    <property type="project" value="InterPro"/>
</dbReference>
<dbReference type="GO" id="GO:0006412">
    <property type="term" value="P:translation"/>
    <property type="evidence" value="ECO:0007669"/>
    <property type="project" value="UniProtKB-UniRule"/>
</dbReference>
<dbReference type="CDD" id="cd01658">
    <property type="entry name" value="Ribosomal_L30"/>
    <property type="match status" value="1"/>
</dbReference>
<dbReference type="Gene3D" id="3.30.1390.20">
    <property type="entry name" value="Ribosomal protein L30, ferredoxin-like fold domain"/>
    <property type="match status" value="1"/>
</dbReference>
<dbReference type="HAMAP" id="MF_01371_B">
    <property type="entry name" value="Ribosomal_uL30_B"/>
    <property type="match status" value="1"/>
</dbReference>
<dbReference type="InterPro" id="IPR036919">
    <property type="entry name" value="Ribo_uL30_ferredoxin-like_sf"/>
</dbReference>
<dbReference type="InterPro" id="IPR005996">
    <property type="entry name" value="Ribosomal_uL30_bac-type"/>
</dbReference>
<dbReference type="InterPro" id="IPR016082">
    <property type="entry name" value="Ribosomal_uL30_ferredoxin-like"/>
</dbReference>
<dbReference type="NCBIfam" id="TIGR01308">
    <property type="entry name" value="rpmD_bact"/>
    <property type="match status" value="1"/>
</dbReference>
<dbReference type="Pfam" id="PF00327">
    <property type="entry name" value="Ribosomal_L30"/>
    <property type="match status" value="1"/>
</dbReference>
<dbReference type="PIRSF" id="PIRSF002211">
    <property type="entry name" value="Ribosomal_L30_bac-type"/>
    <property type="match status" value="1"/>
</dbReference>
<dbReference type="SUPFAM" id="SSF55129">
    <property type="entry name" value="Ribosomal protein L30p/L7e"/>
    <property type="match status" value="1"/>
</dbReference>
<organism>
    <name type="scientific">Lacticaseibacillus paracasei (strain ATCC 334 / BCRC 17002 / CCUG 31169 / CIP 107868 / KCTC 3260 / NRRL B-441)</name>
    <name type="common">Lactobacillus paracasei</name>
    <dbReference type="NCBI Taxonomy" id="321967"/>
    <lineage>
        <taxon>Bacteria</taxon>
        <taxon>Bacillati</taxon>
        <taxon>Bacillota</taxon>
        <taxon>Bacilli</taxon>
        <taxon>Lactobacillales</taxon>
        <taxon>Lactobacillaceae</taxon>
        <taxon>Lacticaseibacillus</taxon>
    </lineage>
</organism>
<reference key="1">
    <citation type="journal article" date="2006" name="Proc. Natl. Acad. Sci. U.S.A.">
        <title>Comparative genomics of the lactic acid bacteria.</title>
        <authorList>
            <person name="Makarova K.S."/>
            <person name="Slesarev A."/>
            <person name="Wolf Y.I."/>
            <person name="Sorokin A."/>
            <person name="Mirkin B."/>
            <person name="Koonin E.V."/>
            <person name="Pavlov A."/>
            <person name="Pavlova N."/>
            <person name="Karamychev V."/>
            <person name="Polouchine N."/>
            <person name="Shakhova V."/>
            <person name="Grigoriev I."/>
            <person name="Lou Y."/>
            <person name="Rohksar D."/>
            <person name="Lucas S."/>
            <person name="Huang K."/>
            <person name="Goodstein D.M."/>
            <person name="Hawkins T."/>
            <person name="Plengvidhya V."/>
            <person name="Welker D."/>
            <person name="Hughes J."/>
            <person name="Goh Y."/>
            <person name="Benson A."/>
            <person name="Baldwin K."/>
            <person name="Lee J.-H."/>
            <person name="Diaz-Muniz I."/>
            <person name="Dosti B."/>
            <person name="Smeianov V."/>
            <person name="Wechter W."/>
            <person name="Barabote R."/>
            <person name="Lorca G."/>
            <person name="Altermann E."/>
            <person name="Barrangou R."/>
            <person name="Ganesan B."/>
            <person name="Xie Y."/>
            <person name="Rawsthorne H."/>
            <person name="Tamir D."/>
            <person name="Parker C."/>
            <person name="Breidt F."/>
            <person name="Broadbent J.R."/>
            <person name="Hutkins R."/>
            <person name="O'Sullivan D."/>
            <person name="Steele J."/>
            <person name="Unlu G."/>
            <person name="Saier M.H. Jr."/>
            <person name="Klaenhammer T."/>
            <person name="Richardson P."/>
            <person name="Kozyavkin S."/>
            <person name="Weimer B.C."/>
            <person name="Mills D.A."/>
        </authorList>
    </citation>
    <scope>NUCLEOTIDE SEQUENCE [LARGE SCALE GENOMIC DNA]</scope>
    <source>
        <strain>ATCC 334 / BCRC 17002 / CCUG 31169 / CIP 107868 / KCTC 3260 / NRRL B-441</strain>
    </source>
</reference>
<feature type="chain" id="PRO_1000056053" description="Large ribosomal subunit protein uL30">
    <location>
        <begin position="1"/>
        <end position="61"/>
    </location>
</feature>
<keyword id="KW-1185">Reference proteome</keyword>
<keyword id="KW-0687">Ribonucleoprotein</keyword>
<keyword id="KW-0689">Ribosomal protein</keyword>
<comment type="subunit">
    <text evidence="1">Part of the 50S ribosomal subunit.</text>
</comment>
<comment type="similarity">
    <text evidence="1">Belongs to the universal ribosomal protein uL30 family.</text>
</comment>
<sequence>MAQLKITLTRSAAHRLPKQRKIVKELGLARVNSSVIKPDNAATRGAIFQISHLVSVEEIKD</sequence>
<gene>
    <name evidence="1" type="primary">rpmD</name>
    <name type="ordered locus">LSEI_2485</name>
</gene>
<proteinExistence type="inferred from homology"/>
<name>RL30_LACP3</name>
<evidence type="ECO:0000255" key="1">
    <source>
        <dbReference type="HAMAP-Rule" id="MF_01371"/>
    </source>
</evidence>
<evidence type="ECO:0000305" key="2"/>
<protein>
    <recommendedName>
        <fullName evidence="1">Large ribosomal subunit protein uL30</fullName>
    </recommendedName>
    <alternativeName>
        <fullName evidence="2">50S ribosomal protein L30</fullName>
    </alternativeName>
</protein>